<accession>Q5YCW1</accession>
<comment type="function">
    <text evidence="1">Promotes microtubule assembly and stability, and might be involved in the establishment and maintenance of neuronal polarity. The C-terminus binds axonal microtubules while the N-terminus binds neural plasma membrane components, suggesting that tau functions as a linker protein between both. Axonal polarity is predetermined by tau localization (in the neuronal cell) in the domain of the cell body defined by the centrosome. The short isoforms allow plasticity of the cytoskeleton whereas the longer isoforms may preferentially play a role in its stabilization (By similarity).</text>
</comment>
<comment type="subunit">
    <text evidence="2 3 4">Interacts with MARK1, MARK2, MARK3 and MARK4 (By similarity). Interacts with SQSTM1 when polyubiquitinated (By similarity). Interacts with PSMC2 through SQSTM1 (By similarity). Interacts with FKBP4 (By similarity). Binds to CSNK1D (By similarity). Interacts with SGK1 (By similarity). Interacts with EPM2A; the interaction dephosphorylates MAPT at Ser-396 (By similarity). Interacts with PIN1 (By similarity). Interacts with LRRK2 (By similarity). Interacts with LRP1, leading to endocytosis; this interaction is reduced in the presence of LRPAP1/RAP (By similarity).</text>
</comment>
<comment type="subcellular location">
    <subcellularLocation>
        <location evidence="2">Cytoplasm</location>
        <location evidence="2">Cytosol</location>
    </subcellularLocation>
    <subcellularLocation>
        <location evidence="2">Cell membrane</location>
        <topology evidence="2">Peripheral membrane protein</topology>
        <orientation evidence="2">Cytoplasmic side</orientation>
    </subcellularLocation>
    <subcellularLocation>
        <location evidence="2">Cytoplasm</location>
        <location evidence="2">Cytoskeleton</location>
    </subcellularLocation>
    <subcellularLocation>
        <location evidence="2">Cell projection</location>
        <location evidence="2">Axon</location>
    </subcellularLocation>
    <subcellularLocation>
        <location evidence="2">Cell projection</location>
        <location evidence="2">Dendrite</location>
    </subcellularLocation>
    <text evidence="2">Mostly found in the axons of neurons, in the cytosol and in association with plasma membrane components.</text>
</comment>
<comment type="domain">
    <text evidence="1">The tau/MAP repeat binds to tubulin.</text>
</comment>
<comment type="PTM">
    <text evidence="1">Polyubiquitinated. Requires functional TRAF6 and may provoke SQSTM1-dependent degradation by the proteasome (By similarity).</text>
</comment>
<comment type="PTM">
    <text evidence="1 2">Phosphorylation at various serine and threonine residues in S-P or T-P motifs by proline-directed protein kinases (PDPK1, CDK1, CDK5, GSK3, MAPK) (a few sites per protein in interphase, more in mitosis), and at serine residues in K-X-G-S motifs by MAP/microtubule affinity-regulating kinase (MARK1, MARK2, MARK3 or MARK4), causing detachment from microtubules, and their disassembly (By similarity). Phosphorylation at Ser-597 by BRSK1 and BRSK2 in neurons affects ability to bind microtubules and plays a role in neuron polarization. Phosphorylated by PHK. Dephosphorylation at several serine and threonine residues by the serine/threonine phosphatase PPP5C (By similarity). Phosphorylation at Ser-214 by SGK1 mediates microtubule depolymerization and neurite formation in hippocampal neurons (By similarity).</text>
</comment>
<sequence length="776" mass="80979">MAEPRQEFEVMEDHAGTYGLGDRKDQGGYTMHQDQEGDTDAGLKESPLQTPTEDGSEEPGSETSDAKSTPTAEDVTAPLVDEGAPGKQAAAQPHTEIPEGTTAEEAGIGDTPSLEDEAAGHVTQEPESGKVVQEGFLREPGPPGLSHQLMSGMPGAPLLPEGPREATRQPSGTGPEDTEGGRHAPELLKHQLLGDLHQEGPPLKGAGGKERPGSKEEVDEDRDVDESSLQDSPPSKASPAQDGRPPQTAAREATSIPGFPAEGAIPLPVDFLSKVSTEIPASEPDGPSAGRAKGQDAHLEFTFHVEITPNVQKEQAHSEEHLGRAAFPGAPGEGPEARGPSLGEDTKEADLPEPSEKQPAAAPRGKPVSRVPQLKARMVSKSKDGTGSDDKKAKTSTRSSAKTLKNRPCLSPKHPTPGSSDPLIQPSSPAVCPEPPSSPKYVSSVTPRTGSSGAKEMKLKGADGKTKIATPRGAAPPGQKGQANATRIPAKTPPAPKTPPSSATKQVQRRPPPAGPRSERGEPPKSGDRSGYSSPGSPGTPGSRSRTPSLPTPPTREPKKVAVVRTPPKSPSSAKSRLQTAPVPMPDLKNVKSKIGSTENLKHQPGGGKVQIINKKLDLSNVQSKCGSKDNIKHVPGGGSVQIVYKPVDLSKVTSKCGSLGNIHHKPGGGQVEVKSEKLDFKDRVQSKIGSLDNITHVPGGGNKKIETHKLTFRENAKAKTDHGAEIVYKSPVVSGDTSPRHLSNVSSTGSIDMVDSPQLATLADEVSASLAKQGL</sequence>
<organism>
    <name type="scientific">Pan troglodytes</name>
    <name type="common">Chimpanzee</name>
    <dbReference type="NCBI Taxonomy" id="9598"/>
    <lineage>
        <taxon>Eukaryota</taxon>
        <taxon>Metazoa</taxon>
        <taxon>Chordata</taxon>
        <taxon>Craniata</taxon>
        <taxon>Vertebrata</taxon>
        <taxon>Euteleostomi</taxon>
        <taxon>Mammalia</taxon>
        <taxon>Eutheria</taxon>
        <taxon>Euarchontoglires</taxon>
        <taxon>Primates</taxon>
        <taxon>Haplorrhini</taxon>
        <taxon>Catarrhini</taxon>
        <taxon>Hominidae</taxon>
        <taxon>Pan</taxon>
    </lineage>
</organism>
<evidence type="ECO:0000250" key="1"/>
<evidence type="ECO:0000250" key="2">
    <source>
        <dbReference type="UniProtKB" id="P10636"/>
    </source>
</evidence>
<evidence type="ECO:0000250" key="3">
    <source>
        <dbReference type="UniProtKB" id="P10637"/>
    </source>
</evidence>
<evidence type="ECO:0000250" key="4">
    <source>
        <dbReference type="UniProtKB" id="P19332"/>
    </source>
</evidence>
<evidence type="ECO:0000255" key="5">
    <source>
        <dbReference type="PROSITE-ProRule" id="PRU00824"/>
    </source>
</evidence>
<evidence type="ECO:0000256" key="6">
    <source>
        <dbReference type="SAM" id="MobiDB-lite"/>
    </source>
</evidence>
<protein>
    <recommendedName>
        <fullName>Microtubule-associated protein tau</fullName>
    </recommendedName>
</protein>
<gene>
    <name type="primary">MAPT</name>
</gene>
<feature type="initiator methionine" description="Removed" evidence="2">
    <location>
        <position position="1"/>
    </location>
</feature>
<feature type="chain" id="PRO_0000072743" description="Microtubule-associated protein tau">
    <location>
        <begin position="2"/>
        <end position="776"/>
    </location>
</feature>
<feature type="repeat" description="Tau/MAP 1" evidence="5">
    <location>
        <begin position="579"/>
        <end position="609"/>
    </location>
</feature>
<feature type="repeat" description="Tau/MAP 2" evidence="5">
    <location>
        <begin position="610"/>
        <end position="640"/>
    </location>
</feature>
<feature type="repeat" description="Tau/MAP 3" evidence="5">
    <location>
        <begin position="641"/>
        <end position="671"/>
    </location>
</feature>
<feature type="repeat" description="Tau/MAP 4" evidence="5">
    <location>
        <begin position="672"/>
        <end position="703"/>
    </location>
</feature>
<feature type="region of interest" description="Disordered" evidence="6">
    <location>
        <begin position="1"/>
        <end position="591"/>
    </location>
</feature>
<feature type="region of interest" description="Disordered" evidence="6">
    <location>
        <begin position="733"/>
        <end position="752"/>
    </location>
</feature>
<feature type="compositionally biased region" description="Basic and acidic residues" evidence="6">
    <location>
        <begin position="1"/>
        <end position="26"/>
    </location>
</feature>
<feature type="compositionally biased region" description="Polar residues" evidence="6">
    <location>
        <begin position="61"/>
        <end position="71"/>
    </location>
</feature>
<feature type="compositionally biased region" description="Basic and acidic residues" evidence="6">
    <location>
        <begin position="179"/>
        <end position="189"/>
    </location>
</feature>
<feature type="compositionally biased region" description="Basic and acidic residues" evidence="6">
    <location>
        <begin position="207"/>
        <end position="216"/>
    </location>
</feature>
<feature type="compositionally biased region" description="Acidic residues" evidence="6">
    <location>
        <begin position="217"/>
        <end position="228"/>
    </location>
</feature>
<feature type="compositionally biased region" description="Basic and acidic residues" evidence="6">
    <location>
        <begin position="293"/>
        <end position="303"/>
    </location>
</feature>
<feature type="compositionally biased region" description="Basic and acidic residues" evidence="6">
    <location>
        <begin position="314"/>
        <end position="323"/>
    </location>
</feature>
<feature type="compositionally biased region" description="Low complexity" evidence="6">
    <location>
        <begin position="324"/>
        <end position="340"/>
    </location>
</feature>
<feature type="compositionally biased region" description="Basic and acidic residues" evidence="6">
    <location>
        <begin position="344"/>
        <end position="356"/>
    </location>
</feature>
<feature type="compositionally biased region" description="Basic and acidic residues" evidence="6">
    <location>
        <begin position="381"/>
        <end position="393"/>
    </location>
</feature>
<feature type="compositionally biased region" description="Polar residues" evidence="6">
    <location>
        <begin position="440"/>
        <end position="452"/>
    </location>
</feature>
<feature type="compositionally biased region" description="Basic and acidic residues" evidence="6">
    <location>
        <begin position="455"/>
        <end position="466"/>
    </location>
</feature>
<feature type="compositionally biased region" description="Basic and acidic residues" evidence="6">
    <location>
        <begin position="517"/>
        <end position="528"/>
    </location>
</feature>
<feature type="compositionally biased region" description="Low complexity" evidence="6">
    <location>
        <begin position="529"/>
        <end position="549"/>
    </location>
</feature>
<feature type="compositionally biased region" description="Polar residues" evidence="6">
    <location>
        <begin position="736"/>
        <end position="751"/>
    </location>
</feature>
<feature type="modified residue" description="N-acetylalanine" evidence="2">
    <location>
        <position position="2"/>
    </location>
</feature>
<feature type="modified residue" description="Phosphotyrosine" evidence="2">
    <location>
        <position position="18"/>
    </location>
</feature>
<feature type="modified residue" description="Phosphotyrosine" evidence="3">
    <location>
        <position position="29"/>
    </location>
</feature>
<feature type="modified residue" description="Phosphoserine" evidence="4">
    <location>
        <position position="46"/>
    </location>
</feature>
<feature type="modified residue" description="Phosphoserine" evidence="4">
    <location>
        <position position="61"/>
    </location>
</feature>
<feature type="modified residue" description="Phosphothreonine" evidence="3">
    <location>
        <position position="69"/>
    </location>
</feature>
<feature type="modified residue" description="Phosphothreonine" evidence="4">
    <location>
        <position position="71"/>
    </location>
</feature>
<feature type="modified residue" description="Phosphothreonine" evidence="3">
    <location>
        <position position="111"/>
    </location>
</feature>
<feature type="modified residue" description="Phosphoserine" evidence="2">
    <location>
        <position position="214"/>
    </location>
</feature>
<feature type="modified residue" description="Phosphothreonine" evidence="2">
    <location>
        <position position="470"/>
    </location>
</feature>
<feature type="modified residue" description="Omega-N-methylarginine" evidence="3">
    <location>
        <position position="472"/>
    </location>
</feature>
<feature type="modified residue" description="N6,N6-dimethyllysine; alternate" evidence="3">
    <location>
        <position position="480"/>
    </location>
</feature>
<feature type="modified residue" description="N6-acetyllysine; alternate" evidence="3">
    <location>
        <position position="480"/>
    </location>
</feature>
<feature type="modified residue" description="Phosphothreonine" evidence="3">
    <location>
        <position position="486"/>
    </location>
</feature>
<feature type="modified residue" description="Phosphothreonine" evidence="3">
    <location>
        <position position="492"/>
    </location>
</feature>
<feature type="modified residue" description="Phosphothreonine" evidence="2">
    <location>
        <position position="498"/>
    </location>
</feature>
<feature type="modified residue" description="Phosphoserine" evidence="3">
    <location>
        <position position="502"/>
    </location>
</feature>
<feature type="modified residue" description="Phosphoserine" evidence="3">
    <location>
        <position position="526"/>
    </location>
</feature>
<feature type="modified residue" description="Phosphoserine" evidence="3">
    <location>
        <position position="530"/>
    </location>
</feature>
<feature type="modified residue" description="Phosphotyrosine" evidence="2">
    <location>
        <position position="532"/>
    </location>
</feature>
<feature type="modified residue" description="Phosphoserine" evidence="2">
    <location>
        <position position="533"/>
    </location>
</feature>
<feature type="modified residue" description="Phosphoserine" evidence="2">
    <location>
        <position position="534"/>
    </location>
</feature>
<feature type="modified residue" description="Phosphoserine" evidence="2">
    <location>
        <position position="537"/>
    </location>
</feature>
<feature type="modified residue" description="Phosphothreonine" evidence="2">
    <location>
        <position position="540"/>
    </location>
</feature>
<feature type="modified residue" description="Phosphothreonine" evidence="2">
    <location>
        <position position="547"/>
    </location>
</feature>
<feature type="modified residue" description="Phosphoserine" evidence="2">
    <location>
        <position position="549"/>
    </location>
</feature>
<feature type="modified residue" description="Phosphothreonine" evidence="2">
    <location>
        <position position="552"/>
    </location>
</feature>
<feature type="modified residue" description="N6-acetyllysine" evidence="3">
    <location>
        <position position="560"/>
    </location>
</feature>
<feature type="modified residue" description="Phosphothreonine" evidence="2">
    <location>
        <position position="566"/>
    </location>
</feature>
<feature type="modified residue" description="Phosphoserine" evidence="2">
    <location>
        <position position="570"/>
    </location>
</feature>
<feature type="modified residue" description="Phosphoserine" evidence="2">
    <location>
        <position position="572"/>
    </location>
</feature>
<feature type="modified residue" description="N6-acetyllysine; alternate" evidence="3">
    <location>
        <position position="594"/>
    </location>
</feature>
<feature type="modified residue" description="N6-methyllysine; alternate" evidence="3">
    <location>
        <position position="594"/>
    </location>
</feature>
<feature type="modified residue" description="Phosphoserine" evidence="2">
    <location>
        <position position="597"/>
    </location>
</feature>
<feature type="modified residue" description="N6-acetyllysine; alternate" evidence="3">
    <location>
        <position position="616"/>
    </location>
</feature>
<feature type="modified residue" description="Phosphoserine" evidence="2">
    <location>
        <position position="620"/>
    </location>
</feature>
<feature type="modified residue" description="Phosphoserine" evidence="2">
    <location>
        <position position="624"/>
    </location>
</feature>
<feature type="modified residue" description="N6-acetyllysine" evidence="3">
    <location>
        <position position="625"/>
    </location>
</feature>
<feature type="modified residue" description="Phosphoserine" evidence="2">
    <location>
        <position position="628"/>
    </location>
</feature>
<feature type="modified residue" description="N6-acetyllysine; alternate" evidence="3">
    <location>
        <position position="633"/>
    </location>
</feature>
<feature type="modified residue" description="Phosphoserine" evidence="2">
    <location>
        <position position="640"/>
    </location>
</feature>
<feature type="modified residue" description="N6,N6-dimethyllysine; alternate" evidence="3">
    <location>
        <position position="646"/>
    </location>
</feature>
<feature type="modified residue" description="N6-acetyllysine; alternate" evidence="3">
    <location>
        <position position="646"/>
    </location>
</feature>
<feature type="modified residue" description="N6-acetyllysine; alternate" evidence="3">
    <location>
        <position position="652"/>
    </location>
</feature>
<feature type="modified residue" description="N6-acetyllysine; alternate" evidence="3">
    <location>
        <position position="656"/>
    </location>
</feature>
<feature type="modified residue" description="Phosphoserine" evidence="2">
    <location>
        <position position="659"/>
    </location>
</feature>
<feature type="modified residue" description="N6-acetyllysine; alternate" evidence="3">
    <location>
        <position position="666"/>
    </location>
</feature>
<feature type="modified residue" description="N6-acetyllysine; alternate" evidence="3">
    <location>
        <position position="678"/>
    </location>
</feature>
<feature type="modified residue" description="N6-acetyllysine; alternate" evidence="3">
    <location>
        <position position="682"/>
    </location>
</feature>
<feature type="modified residue" description="Omega-N-methylarginine" evidence="3">
    <location>
        <position position="684"/>
    </location>
</feature>
<feature type="modified residue" description="Phosphoserine" evidence="2">
    <location>
        <position position="687"/>
    </location>
</feature>
<feature type="modified residue" description="Phosphoserine" evidence="2">
    <location>
        <position position="691"/>
    </location>
</feature>
<feature type="modified residue" description="N6-acetyllysine; alternate" evidence="3">
    <location>
        <position position="704"/>
    </location>
</feature>
<feature type="modified residue" description="N6-acetyllysine; alternate" evidence="3">
    <location>
        <position position="720"/>
    </location>
</feature>
<feature type="modified residue" description="Phosphotyrosine" evidence="3">
    <location>
        <position position="729"/>
    </location>
</feature>
<feature type="modified residue" description="Phosphoserine" evidence="2">
    <location>
        <position position="731"/>
    </location>
</feature>
<feature type="modified residue" description="Phosphoserine" evidence="2">
    <location>
        <position position="735"/>
    </location>
</feature>
<feature type="modified residue" description="Phosphothreonine" evidence="3">
    <location>
        <position position="738"/>
    </location>
</feature>
<feature type="modified residue" description="Phosphoserine" evidence="2">
    <location>
        <position position="739"/>
    </location>
</feature>
<feature type="modified residue" description="Phosphoserine" evidence="2">
    <location>
        <position position="744"/>
    </location>
</feature>
<feature type="modified residue" description="Phosphoserine" evidence="2">
    <location>
        <position position="751"/>
    </location>
</feature>
<feature type="modified residue" description="Phosphoserine" evidence="2">
    <location>
        <position position="757"/>
    </location>
</feature>
<feature type="modified residue" description="Phosphothreonine" evidence="2">
    <location>
        <position position="762"/>
    </location>
</feature>
<feature type="cross-link" description="Glycyl lysine isopeptide (Lys-Gly) (interchain with G-Cter in ubiquitin)" evidence="3">
    <location>
        <position position="44"/>
    </location>
</feature>
<feature type="cross-link" description="Glycyl lysine isopeptide (Lys-Gly) (interchain with G-Cter in ubiquitin)" evidence="2">
    <location>
        <position position="589"/>
    </location>
</feature>
<feature type="cross-link" description="Glycyl lysine isopeptide (Lys-Gly) (interchain with G-Cter in ubiquitin); alternate" evidence="3">
    <location>
        <position position="594"/>
    </location>
</feature>
<feature type="cross-link" description="Glycyl lysine isopeptide (Lys-Gly) (interchain with G-Cter in ubiquitin)" evidence="3">
    <location>
        <position position="602"/>
    </location>
</feature>
<feature type="cross-link" description="Glycyl lysine isopeptide (Lys-Gly) (interchain with G-Cter in ubiquitin); alternate" evidence="3">
    <location>
        <position position="616"/>
    </location>
</feature>
<feature type="cross-link" description="Glycyl lysine isopeptide (Lys-Gly) (interchain with G-Cter in ubiquitin); alternate" evidence="3">
    <location>
        <position position="633"/>
    </location>
</feature>
<feature type="cross-link" description="Glycyl lysine isopeptide (Lys-Gly) (interchain with G-Cter in ubiquitin); alternate" evidence="2">
    <location>
        <position position="646"/>
    </location>
</feature>
<feature type="cross-link" description="Glycyl lysine isopeptide (Lys-Gly) (interchain with G-Cter in ubiquitin); alternate" evidence="3">
    <location>
        <position position="652"/>
    </location>
</feature>
<feature type="cross-link" description="Glycyl lysine isopeptide (Lys-Gly) (interchain with G-Cter in ubiquitin); alternate" evidence="3">
    <location>
        <position position="656"/>
    </location>
</feature>
<feature type="cross-link" description="Glycyl lysine isopeptide (Lys-Gly) (interchain with G-Cter in ubiquitin); alternate" evidence="3">
    <location>
        <position position="666"/>
    </location>
</feature>
<feature type="cross-link" description="Glycyl lysine isopeptide (Lys-Gly) (interchain with G-Cter in ubiquitin); alternate" evidence="3">
    <location>
        <position position="678"/>
    </location>
</feature>
<feature type="cross-link" description="Glycyl lysine isopeptide (Lys-Gly) (interchain with G-Cter in ubiquitin); alternate" evidence="3">
    <location>
        <position position="682"/>
    </location>
</feature>
<feature type="cross-link" description="Glycyl lysine isopeptide (Lys-Gly) (interchain with G-Cter in ubiquitin)" evidence="2">
    <location>
        <position position="688"/>
    </location>
</feature>
<feature type="cross-link" description="Glycyl lysine isopeptide (Lys-Gly) (interchain with G-Cter in ubiquitin); alternate" evidence="3">
    <location>
        <position position="704"/>
    </location>
</feature>
<feature type="cross-link" description="Glycyl lysine isopeptide (Lys-Gly) (interchain with G-Cter in ubiquitin)" evidence="3">
    <location>
        <position position="710"/>
    </location>
</feature>
<feature type="cross-link" description="Glycyl lysine isopeptide (Lys-Gly) (interchain with G-Cter in ubiquitin); alternate" evidence="3">
    <location>
        <position position="720"/>
    </location>
</feature>
<keyword id="KW-0007">Acetylation</keyword>
<keyword id="KW-1003">Cell membrane</keyword>
<keyword id="KW-0966">Cell projection</keyword>
<keyword id="KW-0963">Cytoplasm</keyword>
<keyword id="KW-0206">Cytoskeleton</keyword>
<keyword id="KW-1017">Isopeptide bond</keyword>
<keyword id="KW-0472">Membrane</keyword>
<keyword id="KW-0488">Methylation</keyword>
<keyword id="KW-0493">Microtubule</keyword>
<keyword id="KW-0597">Phosphoprotein</keyword>
<keyword id="KW-1185">Reference proteome</keyword>
<keyword id="KW-0677">Repeat</keyword>
<keyword id="KW-0832">Ubl conjugation</keyword>
<name>TAU_PANTR</name>
<proteinExistence type="inferred from homology"/>
<dbReference type="EMBL" id="AY574135">
    <property type="protein sequence ID" value="AAS91773.2"/>
    <property type="molecule type" value="Genomic_DNA"/>
</dbReference>
<dbReference type="EMBL" id="AY574122">
    <property type="protein sequence ID" value="AAS91773.2"/>
    <property type="status" value="JOINED"/>
    <property type="molecule type" value="Genomic_DNA"/>
</dbReference>
<dbReference type="EMBL" id="AY574123">
    <property type="protein sequence ID" value="AAS91773.2"/>
    <property type="status" value="JOINED"/>
    <property type="molecule type" value="Genomic_DNA"/>
</dbReference>
<dbReference type="EMBL" id="AY574124">
    <property type="protein sequence ID" value="AAS91773.2"/>
    <property type="status" value="JOINED"/>
    <property type="molecule type" value="Genomic_DNA"/>
</dbReference>
<dbReference type="EMBL" id="AY574125">
    <property type="protein sequence ID" value="AAS91773.2"/>
    <property type="status" value="JOINED"/>
    <property type="molecule type" value="Genomic_DNA"/>
</dbReference>
<dbReference type="EMBL" id="AY574126">
    <property type="protein sequence ID" value="AAS91773.2"/>
    <property type="status" value="JOINED"/>
    <property type="molecule type" value="Genomic_DNA"/>
</dbReference>
<dbReference type="EMBL" id="AY574127">
    <property type="protein sequence ID" value="AAS91773.2"/>
    <property type="status" value="JOINED"/>
    <property type="molecule type" value="Genomic_DNA"/>
</dbReference>
<dbReference type="EMBL" id="AY574128">
    <property type="protein sequence ID" value="AAS91773.2"/>
    <property type="status" value="JOINED"/>
    <property type="molecule type" value="Genomic_DNA"/>
</dbReference>
<dbReference type="EMBL" id="AY574129">
    <property type="protein sequence ID" value="AAS91773.2"/>
    <property type="status" value="JOINED"/>
    <property type="molecule type" value="Genomic_DNA"/>
</dbReference>
<dbReference type="EMBL" id="AY574130">
    <property type="protein sequence ID" value="AAS91773.2"/>
    <property type="status" value="JOINED"/>
    <property type="molecule type" value="Genomic_DNA"/>
</dbReference>
<dbReference type="EMBL" id="AY574131">
    <property type="protein sequence ID" value="AAS91773.2"/>
    <property type="status" value="JOINED"/>
    <property type="molecule type" value="Genomic_DNA"/>
</dbReference>
<dbReference type="EMBL" id="AY574132">
    <property type="protein sequence ID" value="AAS91773.2"/>
    <property type="status" value="JOINED"/>
    <property type="molecule type" value="Genomic_DNA"/>
</dbReference>
<dbReference type="EMBL" id="AY574133">
    <property type="protein sequence ID" value="AAS91773.2"/>
    <property type="status" value="JOINED"/>
    <property type="molecule type" value="Genomic_DNA"/>
</dbReference>
<dbReference type="EMBL" id="AY574134">
    <property type="protein sequence ID" value="AAS91773.2"/>
    <property type="status" value="JOINED"/>
    <property type="molecule type" value="Genomic_DNA"/>
</dbReference>
<dbReference type="SMR" id="Q5YCW1"/>
<dbReference type="FunCoup" id="Q5YCW1">
    <property type="interactions" value="510"/>
</dbReference>
<dbReference type="STRING" id="9598.ENSPTRP00000015840"/>
<dbReference type="PaxDb" id="9598-ENSPTRP00000015840"/>
<dbReference type="Ensembl" id="ENSPTRT00000017113.6">
    <property type="protein sequence ID" value="ENSPTRP00000015840.5"/>
    <property type="gene ID" value="ENSPTRG00000009314.7"/>
</dbReference>
<dbReference type="Ensembl" id="ENSPTRT00000094329.1">
    <property type="protein sequence ID" value="ENSPTRP00000086254.1"/>
    <property type="gene ID" value="ENSPTRG00000046868.1"/>
</dbReference>
<dbReference type="VGNC" id="VGNC:12432">
    <property type="gene designation" value="MAPT"/>
</dbReference>
<dbReference type="eggNOG" id="KOG2418">
    <property type="taxonomic scope" value="Eukaryota"/>
</dbReference>
<dbReference type="GeneTree" id="ENSGT00940000155494"/>
<dbReference type="HOGENOM" id="CLU_021741_2_0_1"/>
<dbReference type="InParanoid" id="Q5YCW1"/>
<dbReference type="TreeFam" id="TF316358"/>
<dbReference type="Proteomes" id="UP000002277">
    <property type="component" value="Chromosome 17"/>
</dbReference>
<dbReference type="Bgee" id="ENSPTRG00000009314">
    <property type="expression patterns" value="Expressed in dorsolateral prefrontal cortex and 19 other cell types or tissues"/>
</dbReference>
<dbReference type="GO" id="GO:0030424">
    <property type="term" value="C:axon"/>
    <property type="evidence" value="ECO:0000250"/>
    <property type="project" value="UniProtKB"/>
</dbReference>
<dbReference type="GO" id="GO:0005737">
    <property type="term" value="C:cytoplasm"/>
    <property type="evidence" value="ECO:0000250"/>
    <property type="project" value="UniProtKB"/>
</dbReference>
<dbReference type="GO" id="GO:0005829">
    <property type="term" value="C:cytosol"/>
    <property type="evidence" value="ECO:0007669"/>
    <property type="project" value="UniProtKB-SubCell"/>
</dbReference>
<dbReference type="GO" id="GO:0030425">
    <property type="term" value="C:dendrite"/>
    <property type="evidence" value="ECO:0000250"/>
    <property type="project" value="UniProtKB"/>
</dbReference>
<dbReference type="GO" id="GO:0030426">
    <property type="term" value="C:growth cone"/>
    <property type="evidence" value="ECO:0000250"/>
    <property type="project" value="UniProtKB"/>
</dbReference>
<dbReference type="GO" id="GO:0005874">
    <property type="term" value="C:microtubule"/>
    <property type="evidence" value="ECO:0007669"/>
    <property type="project" value="UniProtKB-KW"/>
</dbReference>
<dbReference type="GO" id="GO:0043005">
    <property type="term" value="C:neuron projection"/>
    <property type="evidence" value="ECO:0000318"/>
    <property type="project" value="GO_Central"/>
</dbReference>
<dbReference type="GO" id="GO:0005886">
    <property type="term" value="C:plasma membrane"/>
    <property type="evidence" value="ECO:0000250"/>
    <property type="project" value="UniProtKB"/>
</dbReference>
<dbReference type="GO" id="GO:0045298">
    <property type="term" value="C:tubulin complex"/>
    <property type="evidence" value="ECO:0000250"/>
    <property type="project" value="UniProtKB"/>
</dbReference>
<dbReference type="GO" id="GO:0008017">
    <property type="term" value="F:microtubule binding"/>
    <property type="evidence" value="ECO:0000250"/>
    <property type="project" value="UniProtKB"/>
</dbReference>
<dbReference type="GO" id="GO:0000226">
    <property type="term" value="P:microtubule cytoskeleton organization"/>
    <property type="evidence" value="ECO:0000250"/>
    <property type="project" value="UniProtKB"/>
</dbReference>
<dbReference type="GO" id="GO:0031175">
    <property type="term" value="P:neuron projection development"/>
    <property type="evidence" value="ECO:0000318"/>
    <property type="project" value="GO_Central"/>
</dbReference>
<dbReference type="GO" id="GO:0045773">
    <property type="term" value="P:positive regulation of axon extension"/>
    <property type="evidence" value="ECO:0000250"/>
    <property type="project" value="UniProtKB"/>
</dbReference>
<dbReference type="GO" id="GO:0031116">
    <property type="term" value="P:positive regulation of microtubule polymerization"/>
    <property type="evidence" value="ECO:0000250"/>
    <property type="project" value="UniProtKB"/>
</dbReference>
<dbReference type="InterPro" id="IPR027324">
    <property type="entry name" value="MAP2/MAP4/Tau"/>
</dbReference>
<dbReference type="InterPro" id="IPR001084">
    <property type="entry name" value="MAP_tubulin-bd_rpt"/>
</dbReference>
<dbReference type="InterPro" id="IPR002955">
    <property type="entry name" value="Tau"/>
</dbReference>
<dbReference type="PANTHER" id="PTHR11501">
    <property type="entry name" value="MICROTUBULE-ASSOCIATED PROTEIN"/>
    <property type="match status" value="1"/>
</dbReference>
<dbReference type="PANTHER" id="PTHR11501:SF14">
    <property type="entry name" value="MICROTUBULE-ASSOCIATED PROTEIN TAU"/>
    <property type="match status" value="1"/>
</dbReference>
<dbReference type="Pfam" id="PF00418">
    <property type="entry name" value="Tubulin-binding"/>
    <property type="match status" value="4"/>
</dbReference>
<dbReference type="PRINTS" id="PR01261">
    <property type="entry name" value="TAUPROTEIN"/>
</dbReference>
<dbReference type="PROSITE" id="PS00229">
    <property type="entry name" value="TAU_MAP_1"/>
    <property type="match status" value="4"/>
</dbReference>
<dbReference type="PROSITE" id="PS51491">
    <property type="entry name" value="TAU_MAP_2"/>
    <property type="match status" value="4"/>
</dbReference>
<reference key="1">
    <citation type="journal article" date="2004" name="Gene">
        <title>Tau gene (MAPT) sequence variation among primates.</title>
        <authorList>
            <person name="Holzer M."/>
            <person name="Craxton M."/>
            <person name="Jakes R."/>
            <person name="Arendt T."/>
            <person name="Goedert M."/>
        </authorList>
    </citation>
    <scope>NUCLEOTIDE SEQUENCE [GENOMIC DNA]</scope>
</reference>